<comment type="function">
    <text evidence="1">Could be a mediator in iron transactions between iron acquisition and iron-requiring processes, such as synthesis and/or repair of Fe-S clusters in biosynthetic enzymes.</text>
</comment>
<comment type="similarity">
    <text evidence="1">Belongs to the Fe(2+)-trafficking protein family.</text>
</comment>
<evidence type="ECO:0000255" key="1">
    <source>
        <dbReference type="HAMAP-Rule" id="MF_00686"/>
    </source>
</evidence>
<dbReference type="EMBL" id="CP000020">
    <property type="protein sequence ID" value="AAW84916.1"/>
    <property type="molecule type" value="Genomic_DNA"/>
</dbReference>
<dbReference type="RefSeq" id="WP_005417551.1">
    <property type="nucleotide sequence ID" value="NZ_CAWLES010000001.1"/>
</dbReference>
<dbReference type="RefSeq" id="YP_203804.1">
    <property type="nucleotide sequence ID" value="NC_006840.2"/>
</dbReference>
<dbReference type="SMR" id="Q5E7T0"/>
<dbReference type="STRING" id="312309.VF_0421"/>
<dbReference type="EnsemblBacteria" id="AAW84916">
    <property type="protein sequence ID" value="AAW84916"/>
    <property type="gene ID" value="VF_0421"/>
</dbReference>
<dbReference type="GeneID" id="54163057"/>
<dbReference type="KEGG" id="vfi:VF_0421"/>
<dbReference type="PATRIC" id="fig|312309.11.peg.410"/>
<dbReference type="eggNOG" id="COG2924">
    <property type="taxonomic scope" value="Bacteria"/>
</dbReference>
<dbReference type="HOGENOM" id="CLU_170994_0_0_6"/>
<dbReference type="OrthoDB" id="9804318at2"/>
<dbReference type="Proteomes" id="UP000000537">
    <property type="component" value="Chromosome I"/>
</dbReference>
<dbReference type="GO" id="GO:0005829">
    <property type="term" value="C:cytosol"/>
    <property type="evidence" value="ECO:0007669"/>
    <property type="project" value="TreeGrafter"/>
</dbReference>
<dbReference type="GO" id="GO:0005506">
    <property type="term" value="F:iron ion binding"/>
    <property type="evidence" value="ECO:0007669"/>
    <property type="project" value="UniProtKB-UniRule"/>
</dbReference>
<dbReference type="GO" id="GO:0034599">
    <property type="term" value="P:cellular response to oxidative stress"/>
    <property type="evidence" value="ECO:0007669"/>
    <property type="project" value="TreeGrafter"/>
</dbReference>
<dbReference type="FunFam" id="1.10.3880.10:FF:000001">
    <property type="entry name" value="Probable Fe(2+)-trafficking protein"/>
    <property type="match status" value="1"/>
</dbReference>
<dbReference type="Gene3D" id="1.10.3880.10">
    <property type="entry name" value="Fe(II) trafficking protein YggX"/>
    <property type="match status" value="1"/>
</dbReference>
<dbReference type="HAMAP" id="MF_00686">
    <property type="entry name" value="Fe_traffic_YggX"/>
    <property type="match status" value="1"/>
</dbReference>
<dbReference type="InterPro" id="IPR007457">
    <property type="entry name" value="Fe_traffick_prot_YggX"/>
</dbReference>
<dbReference type="InterPro" id="IPR036766">
    <property type="entry name" value="Fe_traffick_prot_YggX_sf"/>
</dbReference>
<dbReference type="NCBIfam" id="NF003817">
    <property type="entry name" value="PRK05408.1"/>
    <property type="match status" value="1"/>
</dbReference>
<dbReference type="PANTHER" id="PTHR36965">
    <property type="entry name" value="FE(2+)-TRAFFICKING PROTEIN-RELATED"/>
    <property type="match status" value="1"/>
</dbReference>
<dbReference type="PANTHER" id="PTHR36965:SF1">
    <property type="entry name" value="FE(2+)-TRAFFICKING PROTEIN-RELATED"/>
    <property type="match status" value="1"/>
</dbReference>
<dbReference type="Pfam" id="PF04362">
    <property type="entry name" value="Iron_traffic"/>
    <property type="match status" value="1"/>
</dbReference>
<dbReference type="PIRSF" id="PIRSF029827">
    <property type="entry name" value="Fe_traffic_YggX"/>
    <property type="match status" value="1"/>
</dbReference>
<dbReference type="SUPFAM" id="SSF111148">
    <property type="entry name" value="YggX-like"/>
    <property type="match status" value="1"/>
</dbReference>
<protein>
    <recommendedName>
        <fullName evidence="1">Probable Fe(2+)-trafficking protein</fullName>
    </recommendedName>
</protein>
<organism>
    <name type="scientific">Aliivibrio fischeri (strain ATCC 700601 / ES114)</name>
    <name type="common">Vibrio fischeri</name>
    <dbReference type="NCBI Taxonomy" id="312309"/>
    <lineage>
        <taxon>Bacteria</taxon>
        <taxon>Pseudomonadati</taxon>
        <taxon>Pseudomonadota</taxon>
        <taxon>Gammaproteobacteria</taxon>
        <taxon>Vibrionales</taxon>
        <taxon>Vibrionaceae</taxon>
        <taxon>Aliivibrio</taxon>
    </lineage>
</organism>
<feature type="chain" id="PRO_0000214509" description="Probable Fe(2+)-trafficking protein">
    <location>
        <begin position="1"/>
        <end position="90"/>
    </location>
</feature>
<proteinExistence type="inferred from homology"/>
<accession>Q5E7T0</accession>
<name>FETP_ALIF1</name>
<keyword id="KW-0408">Iron</keyword>
<keyword id="KW-1185">Reference proteome</keyword>
<reference key="1">
    <citation type="journal article" date="2005" name="Proc. Natl. Acad. Sci. U.S.A.">
        <title>Complete genome sequence of Vibrio fischeri: a symbiotic bacterium with pathogenic congeners.</title>
        <authorList>
            <person name="Ruby E.G."/>
            <person name="Urbanowski M."/>
            <person name="Campbell J."/>
            <person name="Dunn A."/>
            <person name="Faini M."/>
            <person name="Gunsalus R."/>
            <person name="Lostroh P."/>
            <person name="Lupp C."/>
            <person name="McCann J."/>
            <person name="Millikan D."/>
            <person name="Schaefer A."/>
            <person name="Stabb E."/>
            <person name="Stevens A."/>
            <person name="Visick K."/>
            <person name="Whistler C."/>
            <person name="Greenberg E.P."/>
        </authorList>
    </citation>
    <scope>NUCLEOTIDE SEQUENCE [LARGE SCALE GENOMIC DNA]</scope>
    <source>
        <strain>ATCC 700601 / ES114</strain>
    </source>
</reference>
<gene>
    <name type="ordered locus">VF_0421</name>
</gene>
<sequence length="90" mass="10536">MSRTVFCVRLNKEADGLDFQLYPGELGKRIFDNISKEAWGQWQHKQTMLINEKKLNMMDPEHRKLLETEMEGFLFDGKDVVIDGYTPPSE</sequence>